<accession>Q54PF1</accession>
<protein>
    <recommendedName>
        <fullName>Casein kinase II subunit beta</fullName>
        <shortName>CK II beta</shortName>
    </recommendedName>
</protein>
<reference key="1">
    <citation type="journal article" date="2005" name="Nature">
        <title>The genome of the social amoeba Dictyostelium discoideum.</title>
        <authorList>
            <person name="Eichinger L."/>
            <person name="Pachebat J.A."/>
            <person name="Gloeckner G."/>
            <person name="Rajandream M.A."/>
            <person name="Sucgang R."/>
            <person name="Berriman M."/>
            <person name="Song J."/>
            <person name="Olsen R."/>
            <person name="Szafranski K."/>
            <person name="Xu Q."/>
            <person name="Tunggal B."/>
            <person name="Kummerfeld S."/>
            <person name="Madera M."/>
            <person name="Konfortov B.A."/>
            <person name="Rivero F."/>
            <person name="Bankier A.T."/>
            <person name="Lehmann R."/>
            <person name="Hamlin N."/>
            <person name="Davies R."/>
            <person name="Gaudet P."/>
            <person name="Fey P."/>
            <person name="Pilcher K."/>
            <person name="Chen G."/>
            <person name="Saunders D."/>
            <person name="Sodergren E.J."/>
            <person name="Davis P."/>
            <person name="Kerhornou A."/>
            <person name="Nie X."/>
            <person name="Hall N."/>
            <person name="Anjard C."/>
            <person name="Hemphill L."/>
            <person name="Bason N."/>
            <person name="Farbrother P."/>
            <person name="Desany B."/>
            <person name="Just E."/>
            <person name="Morio T."/>
            <person name="Rost R."/>
            <person name="Churcher C.M."/>
            <person name="Cooper J."/>
            <person name="Haydock S."/>
            <person name="van Driessche N."/>
            <person name="Cronin A."/>
            <person name="Goodhead I."/>
            <person name="Muzny D.M."/>
            <person name="Mourier T."/>
            <person name="Pain A."/>
            <person name="Lu M."/>
            <person name="Harper D."/>
            <person name="Lindsay R."/>
            <person name="Hauser H."/>
            <person name="James K.D."/>
            <person name="Quiles M."/>
            <person name="Madan Babu M."/>
            <person name="Saito T."/>
            <person name="Buchrieser C."/>
            <person name="Wardroper A."/>
            <person name="Felder M."/>
            <person name="Thangavelu M."/>
            <person name="Johnson D."/>
            <person name="Knights A."/>
            <person name="Loulseged H."/>
            <person name="Mungall K.L."/>
            <person name="Oliver K."/>
            <person name="Price C."/>
            <person name="Quail M.A."/>
            <person name="Urushihara H."/>
            <person name="Hernandez J."/>
            <person name="Rabbinowitsch E."/>
            <person name="Steffen D."/>
            <person name="Sanders M."/>
            <person name="Ma J."/>
            <person name="Kohara Y."/>
            <person name="Sharp S."/>
            <person name="Simmonds M.N."/>
            <person name="Spiegler S."/>
            <person name="Tivey A."/>
            <person name="Sugano S."/>
            <person name="White B."/>
            <person name="Walker D."/>
            <person name="Woodward J.R."/>
            <person name="Winckler T."/>
            <person name="Tanaka Y."/>
            <person name="Shaulsky G."/>
            <person name="Schleicher M."/>
            <person name="Weinstock G.M."/>
            <person name="Rosenthal A."/>
            <person name="Cox E.C."/>
            <person name="Chisholm R.L."/>
            <person name="Gibbs R.A."/>
            <person name="Loomis W.F."/>
            <person name="Platzer M."/>
            <person name="Kay R.R."/>
            <person name="Williams J.G."/>
            <person name="Dear P.H."/>
            <person name="Noegel A.A."/>
            <person name="Barrell B.G."/>
            <person name="Kuspa A."/>
        </authorList>
    </citation>
    <scope>NUCLEOTIDE SEQUENCE [LARGE SCALE GENOMIC DNA]</scope>
    <source>
        <strain>AX4</strain>
    </source>
</reference>
<name>CK2B_DICDI</name>
<proteinExistence type="inferred from homology"/>
<keyword id="KW-1185">Reference proteome</keyword>
<feature type="chain" id="PRO_0000330664" description="Casein kinase II subunit beta">
    <location>
        <begin position="1"/>
        <end position="268"/>
    </location>
</feature>
<feature type="region of interest" description="Disordered" evidence="2">
    <location>
        <begin position="222"/>
        <end position="268"/>
    </location>
</feature>
<feature type="compositionally biased region" description="Low complexity" evidence="2">
    <location>
        <begin position="224"/>
        <end position="268"/>
    </location>
</feature>
<organism>
    <name type="scientific">Dictyostelium discoideum</name>
    <name type="common">Social amoeba</name>
    <dbReference type="NCBI Taxonomy" id="44689"/>
    <lineage>
        <taxon>Eukaryota</taxon>
        <taxon>Amoebozoa</taxon>
        <taxon>Evosea</taxon>
        <taxon>Eumycetozoa</taxon>
        <taxon>Dictyostelia</taxon>
        <taxon>Dictyosteliales</taxon>
        <taxon>Dictyosteliaceae</taxon>
        <taxon>Dictyostelium</taxon>
    </lineage>
</organism>
<evidence type="ECO:0000250" key="1">
    <source>
        <dbReference type="UniProtKB" id="P67870"/>
    </source>
</evidence>
<evidence type="ECO:0000256" key="2">
    <source>
        <dbReference type="SAM" id="MobiDB-lite"/>
    </source>
</evidence>
<evidence type="ECO:0000305" key="3"/>
<gene>
    <name type="primary">csnk2b</name>
    <name type="ORF">DDB_G0284601</name>
</gene>
<comment type="function">
    <text evidence="1">Regulatory subunit of casein kinase II/CK2. As part of the kinase complex regulates the basal catalytic activity of the alpha subunit a constitutively active serine/threonine-protein kinase that phosphorylates a large number of substrates containing acidic residues C-terminal to the phosphorylated serine or threonine.</text>
</comment>
<comment type="subunit">
    <text evidence="1">Casein kinase II/CK2 is a tetramer composed of two alpha subunit and two beta subunits.</text>
</comment>
<comment type="similarity">
    <text evidence="3">Belongs to the casein kinase 2 subunit beta family.</text>
</comment>
<dbReference type="EMBL" id="AAFI02000069">
    <property type="protein sequence ID" value="EAL65139.1"/>
    <property type="molecule type" value="Genomic_DNA"/>
</dbReference>
<dbReference type="RefSeq" id="XP_638493.1">
    <property type="nucleotide sequence ID" value="XM_633401.1"/>
</dbReference>
<dbReference type="SMR" id="Q54PF1"/>
<dbReference type="FunCoup" id="Q54PF1">
    <property type="interactions" value="849"/>
</dbReference>
<dbReference type="STRING" id="44689.Q54PF1"/>
<dbReference type="PaxDb" id="44689-DDB0216346"/>
<dbReference type="EnsemblProtists" id="EAL65139">
    <property type="protein sequence ID" value="EAL65139"/>
    <property type="gene ID" value="DDB_G0284601"/>
</dbReference>
<dbReference type="GeneID" id="8624673"/>
<dbReference type="KEGG" id="ddi:DDB_G0284601"/>
<dbReference type="dictyBase" id="DDB_G0284601">
    <property type="gene designation" value="csnk2b"/>
</dbReference>
<dbReference type="VEuPathDB" id="AmoebaDB:DDB_G0284601"/>
<dbReference type="eggNOG" id="KOG3092">
    <property type="taxonomic scope" value="Eukaryota"/>
</dbReference>
<dbReference type="HOGENOM" id="CLU_034027_3_2_1"/>
<dbReference type="InParanoid" id="Q54PF1"/>
<dbReference type="OMA" id="FGFSVYH"/>
<dbReference type="PhylomeDB" id="Q54PF1"/>
<dbReference type="Reactome" id="R-DDI-2514853">
    <property type="pathway name" value="Condensation of Prometaphase Chromosomes"/>
</dbReference>
<dbReference type="Reactome" id="R-DDI-6798695">
    <property type="pathway name" value="Neutrophil degranulation"/>
</dbReference>
<dbReference type="Reactome" id="R-DDI-6804756">
    <property type="pathway name" value="Regulation of TP53 Activity through Phosphorylation"/>
</dbReference>
<dbReference type="Reactome" id="R-DDI-8934903">
    <property type="pathway name" value="Receptor Mediated Mitophagy"/>
</dbReference>
<dbReference type="Reactome" id="R-DDI-8948751">
    <property type="pathway name" value="Regulation of PTEN stability and activity"/>
</dbReference>
<dbReference type="PRO" id="PR:Q54PF1"/>
<dbReference type="Proteomes" id="UP000002195">
    <property type="component" value="Chromosome 4"/>
</dbReference>
<dbReference type="GO" id="GO:0005737">
    <property type="term" value="C:cytoplasm"/>
    <property type="evidence" value="ECO:0000318"/>
    <property type="project" value="GO_Central"/>
</dbReference>
<dbReference type="GO" id="GO:0005634">
    <property type="term" value="C:nucleus"/>
    <property type="evidence" value="ECO:0000250"/>
    <property type="project" value="dictyBase"/>
</dbReference>
<dbReference type="GO" id="GO:0005956">
    <property type="term" value="C:protein kinase CK2 complex"/>
    <property type="evidence" value="ECO:0000318"/>
    <property type="project" value="GO_Central"/>
</dbReference>
<dbReference type="GO" id="GO:0019887">
    <property type="term" value="F:protein kinase regulator activity"/>
    <property type="evidence" value="ECO:0000318"/>
    <property type="project" value="GO_Central"/>
</dbReference>
<dbReference type="FunFam" id="1.10.1820.10:FF:000011">
    <property type="entry name" value="Casein kinase II subunit beta"/>
    <property type="match status" value="1"/>
</dbReference>
<dbReference type="FunFam" id="2.20.25.20:FF:000002">
    <property type="entry name" value="Casein kinase II subunit beta"/>
    <property type="match status" value="1"/>
</dbReference>
<dbReference type="Gene3D" id="2.20.25.20">
    <property type="match status" value="1"/>
</dbReference>
<dbReference type="Gene3D" id="1.10.1820.10">
    <property type="entry name" value="protein kinase ck2 holoenzyme, chain C, domain 1"/>
    <property type="match status" value="1"/>
</dbReference>
<dbReference type="InterPro" id="IPR016149">
    <property type="entry name" value="Casein_kin_II_reg-sub_N"/>
</dbReference>
<dbReference type="InterPro" id="IPR035991">
    <property type="entry name" value="Casein_kinase_II_beta-like"/>
</dbReference>
<dbReference type="InterPro" id="IPR000704">
    <property type="entry name" value="Casein_kinase_II_reg-sub"/>
</dbReference>
<dbReference type="PANTHER" id="PTHR11740">
    <property type="entry name" value="CASEIN KINASE II SUBUNIT BETA"/>
    <property type="match status" value="1"/>
</dbReference>
<dbReference type="PANTHER" id="PTHR11740:SF0">
    <property type="entry name" value="CASEIN KINASE II SUBUNIT BETA"/>
    <property type="match status" value="1"/>
</dbReference>
<dbReference type="Pfam" id="PF01214">
    <property type="entry name" value="CK_II_beta"/>
    <property type="match status" value="1"/>
</dbReference>
<dbReference type="PRINTS" id="PR00472">
    <property type="entry name" value="CASNKINASEII"/>
</dbReference>
<dbReference type="SMART" id="SM01085">
    <property type="entry name" value="CK_II_beta"/>
    <property type="match status" value="1"/>
</dbReference>
<dbReference type="SUPFAM" id="SSF57798">
    <property type="entry name" value="Casein kinase II beta subunit"/>
    <property type="match status" value="1"/>
</dbReference>
<dbReference type="PROSITE" id="PS01101">
    <property type="entry name" value="CK2_BETA"/>
    <property type="match status" value="1"/>
</dbReference>
<sequence>MDRKYKDTSSEEEDSLNEDEMAWIPWYCNLKGNEFFATIDEDYINDDFNLTGLSSLVQFYDSALGIILDSDPDDPLSEDQQEALERSADILYGLIHARYILTPKGLAHMHEKFKKAEFGRCPRVFCQNQPVLPVGLADMQGVDTVKVYCPRCNDIFNPKYRRHSHIDGAYFGTTFPHLLLITYPELIPTKPPQQYIPKIYGFKIHKSARERQLQIQQKKNSLSNNNQNNQNNNINNNNNNNNNNNNNNNNNNNNQQNNNNQQNNNTNK</sequence>